<keyword id="KW-1185">Reference proteome</keyword>
<reference key="1">
    <citation type="journal article" date="1996" name="Science">
        <title>Complete genome sequence of the methanogenic archaeon, Methanococcus jannaschii.</title>
        <authorList>
            <person name="Bult C.J."/>
            <person name="White O."/>
            <person name="Olsen G.J."/>
            <person name="Zhou L."/>
            <person name="Fleischmann R.D."/>
            <person name="Sutton G.G."/>
            <person name="Blake J.A."/>
            <person name="FitzGerald L.M."/>
            <person name="Clayton R.A."/>
            <person name="Gocayne J.D."/>
            <person name="Kerlavage A.R."/>
            <person name="Dougherty B.A."/>
            <person name="Tomb J.-F."/>
            <person name="Adams M.D."/>
            <person name="Reich C.I."/>
            <person name="Overbeek R."/>
            <person name="Kirkness E.F."/>
            <person name="Weinstock K.G."/>
            <person name="Merrick J.M."/>
            <person name="Glodek A."/>
            <person name="Scott J.L."/>
            <person name="Geoghagen N.S.M."/>
            <person name="Weidman J.F."/>
            <person name="Fuhrmann J.L."/>
            <person name="Nguyen D."/>
            <person name="Utterback T.R."/>
            <person name="Kelley J.M."/>
            <person name="Peterson J.D."/>
            <person name="Sadow P.W."/>
            <person name="Hanna M.C."/>
            <person name="Cotton M.D."/>
            <person name="Roberts K.M."/>
            <person name="Hurst M.A."/>
            <person name="Kaine B.P."/>
            <person name="Borodovsky M."/>
            <person name="Klenk H.-P."/>
            <person name="Fraser C.M."/>
            <person name="Smith H.O."/>
            <person name="Woese C.R."/>
            <person name="Venter J.C."/>
        </authorList>
    </citation>
    <scope>NUCLEOTIDE SEQUENCE [LARGE SCALE GENOMIC DNA]</scope>
    <source>
        <strain>ATCC 43067 / DSM 2661 / JAL-1 / JCM 10045 / NBRC 100440</strain>
    </source>
</reference>
<accession>Q58013</accession>
<feature type="chain" id="PRO_0000106949" description="Uncharacterized protein MJ0596">
    <location>
        <begin position="1"/>
        <end position="141"/>
    </location>
</feature>
<sequence>MEDKIEFMAKHKKWFVVKKLKIDENTEDIEIARLLASIDETVLNKIPEYLPFDMNKLYEIADGIYQKKKGRITEEEIAEVLKKLKSPATTRKLNEITESKEGKEILKAILNNIILERLGIQTRVSPKVIEKYIENSQSSNR</sequence>
<organism>
    <name type="scientific">Methanocaldococcus jannaschii (strain ATCC 43067 / DSM 2661 / JAL-1 / JCM 10045 / NBRC 100440)</name>
    <name type="common">Methanococcus jannaschii</name>
    <dbReference type="NCBI Taxonomy" id="243232"/>
    <lineage>
        <taxon>Archaea</taxon>
        <taxon>Methanobacteriati</taxon>
        <taxon>Methanobacteriota</taxon>
        <taxon>Methanomada group</taxon>
        <taxon>Methanococci</taxon>
        <taxon>Methanococcales</taxon>
        <taxon>Methanocaldococcaceae</taxon>
        <taxon>Methanocaldococcus</taxon>
    </lineage>
</organism>
<protein>
    <recommendedName>
        <fullName>Uncharacterized protein MJ0596</fullName>
    </recommendedName>
</protein>
<name>Y596_METJA</name>
<proteinExistence type="predicted"/>
<gene>
    <name type="ordered locus">MJ0596</name>
</gene>
<dbReference type="EMBL" id="L77117">
    <property type="protein sequence ID" value="AAB98596.1"/>
    <property type="molecule type" value="Genomic_DNA"/>
</dbReference>
<dbReference type="PIR" id="D64374">
    <property type="entry name" value="D64374"/>
</dbReference>
<dbReference type="RefSeq" id="WP_010870100.1">
    <property type="nucleotide sequence ID" value="NC_000909.1"/>
</dbReference>
<dbReference type="SMR" id="Q58013"/>
<dbReference type="FunCoup" id="Q58013">
    <property type="interactions" value="6"/>
</dbReference>
<dbReference type="STRING" id="243232.MJ_0596"/>
<dbReference type="PaxDb" id="243232-MJ_0596"/>
<dbReference type="EnsemblBacteria" id="AAB98596">
    <property type="protein sequence ID" value="AAB98596"/>
    <property type="gene ID" value="MJ_0596"/>
</dbReference>
<dbReference type="GeneID" id="1451461"/>
<dbReference type="KEGG" id="mja:MJ_0596"/>
<dbReference type="eggNOG" id="arCOG03415">
    <property type="taxonomic scope" value="Archaea"/>
</dbReference>
<dbReference type="HOGENOM" id="CLU_1860681_0_0_2"/>
<dbReference type="InParanoid" id="Q58013"/>
<dbReference type="OrthoDB" id="86044at2157"/>
<dbReference type="PhylomeDB" id="Q58013"/>
<dbReference type="Proteomes" id="UP000000805">
    <property type="component" value="Chromosome"/>
</dbReference>
<dbReference type="InterPro" id="IPR022620">
    <property type="entry name" value="DUF2666"/>
</dbReference>
<dbReference type="Pfam" id="PF10869">
    <property type="entry name" value="DUF2666"/>
    <property type="match status" value="1"/>
</dbReference>